<gene>
    <name type="primary">PRDX2</name>
</gene>
<name>PRDX2_CRIGR</name>
<comment type="function">
    <text evidence="1">Thiol-specific peroxidase that catalyzes the reduction of hydrogen peroxide and organic hydroperoxides to water and alcohols, respectively. Plays a role in cell protection against oxidative stress by detoxifying peroxides and as sensor of hydrogen peroxide-mediated signaling events. Might participate in the signaling cascades of growth factors and tumor necrosis factor-alpha by regulating the intracellular concentrations of H(2)O(2).</text>
</comment>
<comment type="catalytic activity">
    <reaction evidence="1">
        <text>a hydroperoxide + [thioredoxin]-dithiol = an alcohol + [thioredoxin]-disulfide + H2O</text>
        <dbReference type="Rhea" id="RHEA:62620"/>
        <dbReference type="Rhea" id="RHEA-COMP:10698"/>
        <dbReference type="Rhea" id="RHEA-COMP:10700"/>
        <dbReference type="ChEBI" id="CHEBI:15377"/>
        <dbReference type="ChEBI" id="CHEBI:29950"/>
        <dbReference type="ChEBI" id="CHEBI:30879"/>
        <dbReference type="ChEBI" id="CHEBI:35924"/>
        <dbReference type="ChEBI" id="CHEBI:50058"/>
        <dbReference type="EC" id="1.11.1.24"/>
    </reaction>
</comment>
<comment type="subunit">
    <text evidence="1">Homodimer; disulfide-linked, upon oxidation. 5 homodimers assemble to form a ring-like decamer. Interacts with TIPIN.</text>
</comment>
<comment type="subcellular location">
    <subcellularLocation>
        <location evidence="1">Cytoplasm</location>
    </subcellularLocation>
</comment>
<comment type="PTM">
    <text evidence="1 2">The enzyme can be inactivated by further oxidation of the cysteine sulfenic acid (C(P)-SOH) to sulphinic acid (C(P)-SO2H) instead of its condensation to a disulfide bond. It can be reactivated by forming a transient disulfide bond with sulfiredoxin SRXN1, which reduces the cysteine sulfinic acid in an ATP- and Mg-dependent manner.</text>
</comment>
<comment type="PTM">
    <text evidence="1">Acetylation increases resistance to transition to high molecular-mass complexes. Deacetylated by HDAC6 which decreases reducing activity.</text>
</comment>
<comment type="miscellaneous">
    <text evidence="1">The active site is a conserved redox-active cysteine residue, the peroxidatic cysteine (C(P)), which makes the nucleophilic attack on the peroxide substrate. The peroxide oxidizes the C(P)-SH to cysteine sulfenic acid (C(P)-SOH), which then reacts with another cysteine residue, the resolving cysteine (C(R)), to form a disulfide bridge. The disulfide is subsequently reduced by an appropriate electron donor to complete the catalytic cycle. In this typical 2-Cys peroxiredoxin, C(R) is provided by the other dimeric subunit to form an intersubunit disulfide. The disulfide is subsequently reduced by thioredoxin.</text>
</comment>
<comment type="similarity">
    <text evidence="4">Belongs to the peroxiredoxin family. AhpC/Prx1 subfamily.</text>
</comment>
<organism>
    <name type="scientific">Cricetulus griseus</name>
    <name type="common">Chinese hamster</name>
    <name type="synonym">Cricetulus barabensis griseus</name>
    <dbReference type="NCBI Taxonomy" id="10029"/>
    <lineage>
        <taxon>Eukaryota</taxon>
        <taxon>Metazoa</taxon>
        <taxon>Chordata</taxon>
        <taxon>Craniata</taxon>
        <taxon>Vertebrata</taxon>
        <taxon>Euteleostomi</taxon>
        <taxon>Mammalia</taxon>
        <taxon>Eutheria</taxon>
        <taxon>Euarchontoglires</taxon>
        <taxon>Glires</taxon>
        <taxon>Rodentia</taxon>
        <taxon>Myomorpha</taxon>
        <taxon>Muroidea</taxon>
        <taxon>Cricetidae</taxon>
        <taxon>Cricetinae</taxon>
        <taxon>Cricetulus</taxon>
    </lineage>
</organism>
<feature type="initiator methionine" description="Removed" evidence="1">
    <location>
        <position position="1"/>
    </location>
</feature>
<feature type="chain" id="PRO_0000256855" description="Peroxiredoxin-2">
    <location>
        <begin position="2"/>
        <end position="198"/>
    </location>
</feature>
<feature type="domain" description="Thioredoxin" evidence="3">
    <location>
        <begin position="6"/>
        <end position="164"/>
    </location>
</feature>
<feature type="active site" description="Cysteine sulfenic acid (-SOH) intermediate" evidence="1">
    <location>
        <position position="51"/>
    </location>
</feature>
<feature type="modified residue" description="N-acetylalanine" evidence="1">
    <location>
        <position position="2"/>
    </location>
</feature>
<feature type="modified residue" description="Phosphoserine" evidence="1">
    <location>
        <position position="112"/>
    </location>
</feature>
<feature type="modified residue" description="Phosphothreonine" evidence="1">
    <location>
        <position position="182"/>
    </location>
</feature>
<feature type="modified residue" description="N6-acetyllysine" evidence="1">
    <location>
        <position position="196"/>
    </location>
</feature>
<feature type="disulfide bond" description="Interchain (with C-172); in linked form" evidence="1">
    <location>
        <position position="51"/>
    </location>
</feature>
<feature type="disulfide bond" description="Interchain (with C-51); in linked form" evidence="1">
    <location>
        <position position="172"/>
    </location>
</feature>
<protein>
    <recommendedName>
        <fullName>Peroxiredoxin-2</fullName>
        <ecNumber evidence="1">1.11.1.24</ecNumber>
    </recommendedName>
    <alternativeName>
        <fullName evidence="4">Thioredoxin-dependent peroxiredoxin 2</fullName>
    </alternativeName>
</protein>
<dbReference type="EC" id="1.11.1.24" evidence="1"/>
<dbReference type="EMBL" id="AF532110">
    <property type="protein sequence ID" value="AAM95673.1"/>
    <property type="molecule type" value="mRNA"/>
</dbReference>
<dbReference type="RefSeq" id="NP_001233709.1">
    <property type="nucleotide sequence ID" value="NM_001246780.2"/>
</dbReference>
<dbReference type="SMR" id="Q8K3U7"/>
<dbReference type="PaxDb" id="10029-NP_001233709.1"/>
<dbReference type="Ensembl" id="ENSCGRT00001002205.1">
    <property type="protein sequence ID" value="ENSCGRP00001001838.1"/>
    <property type="gene ID" value="ENSCGRG00001001765.1"/>
</dbReference>
<dbReference type="GeneID" id="100689349"/>
<dbReference type="KEGG" id="cge:100689349"/>
<dbReference type="CTD" id="7001"/>
<dbReference type="eggNOG" id="KOG0852">
    <property type="taxonomic scope" value="Eukaryota"/>
</dbReference>
<dbReference type="GeneTree" id="ENSGT00940000155828"/>
<dbReference type="OMA" id="VCTKELC"/>
<dbReference type="OrthoDB" id="185659at2759"/>
<dbReference type="Proteomes" id="UP000694386">
    <property type="component" value="Unplaced"/>
</dbReference>
<dbReference type="Proteomes" id="UP001108280">
    <property type="component" value="Chromosome 3"/>
</dbReference>
<dbReference type="GO" id="GO:0005829">
    <property type="term" value="C:cytosol"/>
    <property type="evidence" value="ECO:0007669"/>
    <property type="project" value="TreeGrafter"/>
</dbReference>
<dbReference type="GO" id="GO:0008379">
    <property type="term" value="F:thioredoxin peroxidase activity"/>
    <property type="evidence" value="ECO:0007669"/>
    <property type="project" value="TreeGrafter"/>
</dbReference>
<dbReference type="GO" id="GO:0045454">
    <property type="term" value="P:cell redox homeostasis"/>
    <property type="evidence" value="ECO:0007669"/>
    <property type="project" value="TreeGrafter"/>
</dbReference>
<dbReference type="GO" id="GO:0097191">
    <property type="term" value="P:extrinsic apoptotic signaling pathway"/>
    <property type="evidence" value="ECO:0007669"/>
    <property type="project" value="Ensembl"/>
</dbReference>
<dbReference type="GO" id="GO:0042744">
    <property type="term" value="P:hydrogen peroxide catabolic process"/>
    <property type="evidence" value="ECO:0007669"/>
    <property type="project" value="Ensembl"/>
</dbReference>
<dbReference type="GO" id="GO:2001240">
    <property type="term" value="P:negative regulation of extrinsic apoptotic signaling pathway in absence of ligand"/>
    <property type="evidence" value="ECO:0007669"/>
    <property type="project" value="Ensembl"/>
</dbReference>
<dbReference type="GO" id="GO:0031665">
    <property type="term" value="P:negative regulation of lipopolysaccharide-mediated signaling pathway"/>
    <property type="evidence" value="ECO:0007669"/>
    <property type="project" value="Ensembl"/>
</dbReference>
<dbReference type="GO" id="GO:0045581">
    <property type="term" value="P:negative regulation of T cell differentiation"/>
    <property type="evidence" value="ECO:0007669"/>
    <property type="project" value="Ensembl"/>
</dbReference>
<dbReference type="GO" id="GO:0030194">
    <property type="term" value="P:positive regulation of blood coagulation"/>
    <property type="evidence" value="ECO:0007669"/>
    <property type="project" value="Ensembl"/>
</dbReference>
<dbReference type="GO" id="GO:0043410">
    <property type="term" value="P:positive regulation of MAPK cascade"/>
    <property type="evidence" value="ECO:0007669"/>
    <property type="project" value="Ensembl"/>
</dbReference>
<dbReference type="GO" id="GO:0010310">
    <property type="term" value="P:regulation of hydrogen peroxide metabolic process"/>
    <property type="evidence" value="ECO:0007669"/>
    <property type="project" value="Ensembl"/>
</dbReference>
<dbReference type="GO" id="GO:0019430">
    <property type="term" value="P:removal of superoxide radicals"/>
    <property type="evidence" value="ECO:0007669"/>
    <property type="project" value="Ensembl"/>
</dbReference>
<dbReference type="GO" id="GO:0002536">
    <property type="term" value="P:respiratory burst involved in inflammatory response"/>
    <property type="evidence" value="ECO:0007669"/>
    <property type="project" value="Ensembl"/>
</dbReference>
<dbReference type="GO" id="GO:0032496">
    <property type="term" value="P:response to lipopolysaccharide"/>
    <property type="evidence" value="ECO:0007669"/>
    <property type="project" value="Ensembl"/>
</dbReference>
<dbReference type="GO" id="GO:0043029">
    <property type="term" value="P:T cell homeostasis"/>
    <property type="evidence" value="ECO:0007669"/>
    <property type="project" value="Ensembl"/>
</dbReference>
<dbReference type="GO" id="GO:0042098">
    <property type="term" value="P:T cell proliferation"/>
    <property type="evidence" value="ECO:0007669"/>
    <property type="project" value="Ensembl"/>
</dbReference>
<dbReference type="GO" id="GO:0048538">
    <property type="term" value="P:thymus development"/>
    <property type="evidence" value="ECO:0007669"/>
    <property type="project" value="Ensembl"/>
</dbReference>
<dbReference type="CDD" id="cd03015">
    <property type="entry name" value="PRX_Typ2cys"/>
    <property type="match status" value="1"/>
</dbReference>
<dbReference type="FunFam" id="3.40.30.10:FF:000003">
    <property type="entry name" value="Peroxiredoxin 1"/>
    <property type="match status" value="1"/>
</dbReference>
<dbReference type="Gene3D" id="3.40.30.10">
    <property type="entry name" value="Glutaredoxin"/>
    <property type="match status" value="1"/>
</dbReference>
<dbReference type="InterPro" id="IPR000866">
    <property type="entry name" value="AhpC/TSA"/>
</dbReference>
<dbReference type="InterPro" id="IPR050217">
    <property type="entry name" value="Peroxiredoxin"/>
</dbReference>
<dbReference type="InterPro" id="IPR024706">
    <property type="entry name" value="Peroxiredoxin_AhpC-typ"/>
</dbReference>
<dbReference type="InterPro" id="IPR019479">
    <property type="entry name" value="Peroxiredoxin_C"/>
</dbReference>
<dbReference type="InterPro" id="IPR036249">
    <property type="entry name" value="Thioredoxin-like_sf"/>
</dbReference>
<dbReference type="InterPro" id="IPR013766">
    <property type="entry name" value="Thioredoxin_domain"/>
</dbReference>
<dbReference type="PANTHER" id="PTHR10681:SF161">
    <property type="entry name" value="PEROXIREDOXIN-2"/>
    <property type="match status" value="1"/>
</dbReference>
<dbReference type="PANTHER" id="PTHR10681">
    <property type="entry name" value="THIOREDOXIN PEROXIDASE"/>
    <property type="match status" value="1"/>
</dbReference>
<dbReference type="Pfam" id="PF10417">
    <property type="entry name" value="1-cysPrx_C"/>
    <property type="match status" value="1"/>
</dbReference>
<dbReference type="Pfam" id="PF00578">
    <property type="entry name" value="AhpC-TSA"/>
    <property type="match status" value="1"/>
</dbReference>
<dbReference type="PIRSF" id="PIRSF000239">
    <property type="entry name" value="AHPC"/>
    <property type="match status" value="1"/>
</dbReference>
<dbReference type="SUPFAM" id="SSF52833">
    <property type="entry name" value="Thioredoxin-like"/>
    <property type="match status" value="1"/>
</dbReference>
<dbReference type="PROSITE" id="PS51352">
    <property type="entry name" value="THIOREDOXIN_2"/>
    <property type="match status" value="1"/>
</dbReference>
<reference key="1">
    <citation type="submission" date="2002-07" db="EMBL/GenBank/DDBJ databases">
        <title>2D Gel analysis of the proteomic adaptation of a mammalian cell line to oxidative stress reveals changes in the expression of metabolically relevant enzymes.</title>
        <authorList>
            <person name="Keightley J.A."/>
            <person name="Shang L."/>
            <person name="Kinter M."/>
        </authorList>
    </citation>
    <scope>NUCLEOTIDE SEQUENCE [MRNA]</scope>
</reference>
<evidence type="ECO:0000250" key="1">
    <source>
        <dbReference type="UniProtKB" id="P32119"/>
    </source>
</evidence>
<evidence type="ECO:0000250" key="2">
    <source>
        <dbReference type="UniProtKB" id="Q06830"/>
    </source>
</evidence>
<evidence type="ECO:0000255" key="3">
    <source>
        <dbReference type="PROSITE-ProRule" id="PRU00691"/>
    </source>
</evidence>
<evidence type="ECO:0000305" key="4"/>
<keyword id="KW-0007">Acetylation</keyword>
<keyword id="KW-0049">Antioxidant</keyword>
<keyword id="KW-0963">Cytoplasm</keyword>
<keyword id="KW-1015">Disulfide bond</keyword>
<keyword id="KW-0560">Oxidoreductase</keyword>
<keyword id="KW-0575">Peroxidase</keyword>
<keyword id="KW-0597">Phosphoprotein</keyword>
<keyword id="KW-0676">Redox-active center</keyword>
<sequence length="198" mass="21813">MASGNAHIGKPAPDFTATAVVDGAFKEVKLSDYRGKYVVLFFYPLDFTFVCPTEIIAFSNHAEDFRKLGCEVLGVSVDSQFTHLAWINTPRKEGGLGPLNIPLLADVTRSLSENYGVLKTDEGIAYRGLFIIDAKGILRQITVNDLPVGRSVDEALRLVQAFQYTDEHGEVCPAGWKPGSDTIKPNVDDSKEYFSKHN</sequence>
<proteinExistence type="evidence at transcript level"/>
<accession>Q8K3U7</accession>